<proteinExistence type="evidence at protein level"/>
<gene>
    <name type="primary">allS</name>
    <name type="synonym">glxA1</name>
    <name type="synonym">ybbS</name>
    <name type="ordered locus">b0504</name>
    <name type="ordered locus">JW0492</name>
</gene>
<evidence type="ECO:0000255" key="1">
    <source>
        <dbReference type="PROSITE-ProRule" id="PRU00253"/>
    </source>
</evidence>
<evidence type="ECO:0000269" key="2">
    <source>
    </source>
</evidence>
<evidence type="ECO:0000305" key="3"/>
<reference key="1">
    <citation type="journal article" date="1999" name="J. Bacteriol.">
        <title>Genetic analysis of a chromosomal region containing genes required for assimilation of allantoin nitrogen and linked glyoxylate metabolism in Escherichia coli.</title>
        <authorList>
            <person name="Cusa E."/>
            <person name="Obradors N."/>
            <person name="Baldoma L."/>
            <person name="Badia J."/>
            <person name="Aguilar J."/>
        </authorList>
    </citation>
    <scope>NUCLEOTIDE SEQUENCE [GENOMIC DNA]</scope>
    <source>
        <strain>K12 / ECL1</strain>
    </source>
</reference>
<reference key="2">
    <citation type="submission" date="1997-01" db="EMBL/GenBank/DDBJ databases">
        <title>Sequence of minutes 4-25 of Escherichia coli.</title>
        <authorList>
            <person name="Chung E."/>
            <person name="Allen E."/>
            <person name="Araujo R."/>
            <person name="Aparicio A.M."/>
            <person name="Davis K."/>
            <person name="Duncan M."/>
            <person name="Federspiel N."/>
            <person name="Hyman R."/>
            <person name="Kalman S."/>
            <person name="Komp C."/>
            <person name="Kurdi O."/>
            <person name="Lew H."/>
            <person name="Lin D."/>
            <person name="Namath A."/>
            <person name="Oefner P."/>
            <person name="Roberts D."/>
            <person name="Schramm S."/>
            <person name="Davis R.W."/>
        </authorList>
    </citation>
    <scope>NUCLEOTIDE SEQUENCE [LARGE SCALE GENOMIC DNA]</scope>
    <source>
        <strain>K12 / MG1655 / ATCC 47076</strain>
    </source>
</reference>
<reference key="3">
    <citation type="journal article" date="1997" name="Science">
        <title>The complete genome sequence of Escherichia coli K-12.</title>
        <authorList>
            <person name="Blattner F.R."/>
            <person name="Plunkett G. III"/>
            <person name="Bloch C.A."/>
            <person name="Perna N.T."/>
            <person name="Burland V."/>
            <person name="Riley M."/>
            <person name="Collado-Vides J."/>
            <person name="Glasner J.D."/>
            <person name="Rode C.K."/>
            <person name="Mayhew G.F."/>
            <person name="Gregor J."/>
            <person name="Davis N.W."/>
            <person name="Kirkpatrick H.A."/>
            <person name="Goeden M.A."/>
            <person name="Rose D.J."/>
            <person name="Mau B."/>
            <person name="Shao Y."/>
        </authorList>
    </citation>
    <scope>NUCLEOTIDE SEQUENCE [LARGE SCALE GENOMIC DNA]</scope>
    <source>
        <strain>K12 / MG1655 / ATCC 47076</strain>
    </source>
</reference>
<reference key="4">
    <citation type="journal article" date="2006" name="Mol. Syst. Biol.">
        <title>Highly accurate genome sequences of Escherichia coli K-12 strains MG1655 and W3110.</title>
        <authorList>
            <person name="Hayashi K."/>
            <person name="Morooka N."/>
            <person name="Yamamoto Y."/>
            <person name="Fujita K."/>
            <person name="Isono K."/>
            <person name="Choi S."/>
            <person name="Ohtsubo E."/>
            <person name="Baba T."/>
            <person name="Wanner B.L."/>
            <person name="Mori H."/>
            <person name="Horiuchi T."/>
        </authorList>
    </citation>
    <scope>NUCLEOTIDE SEQUENCE [LARGE SCALE GENOMIC DNA]</scope>
    <source>
        <strain>K12 / W3110 / ATCC 27325 / DSM 5911</strain>
    </source>
</reference>
<reference key="5">
    <citation type="journal article" date="2002" name="J. Mol. Biol.">
        <title>Regulation of the Escherichia coli allantoin regulon: coordinated function of the repressor AllR and the activator AllS.</title>
        <authorList>
            <person name="Rintoul M.R."/>
            <person name="Cusa E."/>
            <person name="Baldoma L."/>
            <person name="Badia J."/>
            <person name="Reitzer L."/>
            <person name="Aguilar J."/>
        </authorList>
    </citation>
    <scope>FUNCTION</scope>
    <scope>DNA-BINDING</scope>
    <scope>INDUCTION</scope>
    <source>
        <strain>K12</strain>
    </source>
</reference>
<dbReference type="EMBL" id="U89024">
    <property type="protein sequence ID" value="AAB93845.1"/>
    <property type="molecule type" value="Genomic_DNA"/>
</dbReference>
<dbReference type="EMBL" id="U82664">
    <property type="protein sequence ID" value="AAB40257.1"/>
    <property type="molecule type" value="Genomic_DNA"/>
</dbReference>
<dbReference type="EMBL" id="U00096">
    <property type="protein sequence ID" value="AAC73606.1"/>
    <property type="molecule type" value="Genomic_DNA"/>
</dbReference>
<dbReference type="EMBL" id="AP009048">
    <property type="protein sequence ID" value="BAE76282.1"/>
    <property type="molecule type" value="Genomic_DNA"/>
</dbReference>
<dbReference type="PIR" id="G64781">
    <property type="entry name" value="G64781"/>
</dbReference>
<dbReference type="RefSeq" id="NP_415037.1">
    <property type="nucleotide sequence ID" value="NC_000913.3"/>
</dbReference>
<dbReference type="RefSeq" id="WP_000460145.1">
    <property type="nucleotide sequence ID" value="NZ_STEB01000007.1"/>
</dbReference>
<dbReference type="SMR" id="P0ACR0"/>
<dbReference type="BioGRID" id="4259497">
    <property type="interactions" value="130"/>
</dbReference>
<dbReference type="BioGRID" id="849528">
    <property type="interactions" value="1"/>
</dbReference>
<dbReference type="FunCoup" id="P0ACR0">
    <property type="interactions" value="115"/>
</dbReference>
<dbReference type="IntAct" id="P0ACR0">
    <property type="interactions" value="4"/>
</dbReference>
<dbReference type="STRING" id="511145.b0504"/>
<dbReference type="PaxDb" id="511145-b0504"/>
<dbReference type="DNASU" id="945139"/>
<dbReference type="EnsemblBacteria" id="AAC73606">
    <property type="protein sequence ID" value="AAC73606"/>
    <property type="gene ID" value="b0504"/>
</dbReference>
<dbReference type="GeneID" id="75202347"/>
<dbReference type="GeneID" id="945139"/>
<dbReference type="KEGG" id="ecj:JW0492"/>
<dbReference type="KEGG" id="eco:b0504"/>
<dbReference type="KEGG" id="ecoc:C3026_02475"/>
<dbReference type="PATRIC" id="fig|1411691.4.peg.1773"/>
<dbReference type="EchoBASE" id="EB3053"/>
<dbReference type="eggNOG" id="COG0583">
    <property type="taxonomic scope" value="Bacteria"/>
</dbReference>
<dbReference type="HOGENOM" id="CLU_039613_35_1_6"/>
<dbReference type="InParanoid" id="P0ACR0"/>
<dbReference type="OMA" id="VYMGVWD"/>
<dbReference type="OrthoDB" id="196624at2"/>
<dbReference type="PhylomeDB" id="P0ACR0"/>
<dbReference type="BioCyc" id="EcoCyc:G6274-MONOMER"/>
<dbReference type="PRO" id="PR:P0ACR0"/>
<dbReference type="Proteomes" id="UP000000625">
    <property type="component" value="Chromosome"/>
</dbReference>
<dbReference type="GO" id="GO:0003700">
    <property type="term" value="F:DNA-binding transcription factor activity"/>
    <property type="evidence" value="ECO:0000314"/>
    <property type="project" value="EcoCyc"/>
</dbReference>
<dbReference type="GO" id="GO:0043565">
    <property type="term" value="F:sequence-specific DNA binding"/>
    <property type="evidence" value="ECO:0000314"/>
    <property type="project" value="EcoCyc"/>
</dbReference>
<dbReference type="GO" id="GO:0045893">
    <property type="term" value="P:positive regulation of DNA-templated transcription"/>
    <property type="evidence" value="ECO:0000314"/>
    <property type="project" value="EcoCyc"/>
</dbReference>
<dbReference type="GO" id="GO:0006355">
    <property type="term" value="P:regulation of DNA-templated transcription"/>
    <property type="evidence" value="ECO:0000318"/>
    <property type="project" value="GO_Central"/>
</dbReference>
<dbReference type="FunFam" id="1.10.10.10:FF:000231">
    <property type="entry name" value="HTH-type transcriptional activator AllS"/>
    <property type="match status" value="1"/>
</dbReference>
<dbReference type="FunFam" id="3.40.190.290:FF:000005">
    <property type="entry name" value="HTH-type transcriptional activator AllS"/>
    <property type="match status" value="1"/>
</dbReference>
<dbReference type="Gene3D" id="3.40.190.290">
    <property type="match status" value="1"/>
</dbReference>
<dbReference type="Gene3D" id="1.10.10.10">
    <property type="entry name" value="Winged helix-like DNA-binding domain superfamily/Winged helix DNA-binding domain"/>
    <property type="match status" value="1"/>
</dbReference>
<dbReference type="InterPro" id="IPR050176">
    <property type="entry name" value="LTTR"/>
</dbReference>
<dbReference type="InterPro" id="IPR005119">
    <property type="entry name" value="LysR_subst-bd"/>
</dbReference>
<dbReference type="InterPro" id="IPR000847">
    <property type="entry name" value="Tscrpt_reg_HTH_LysR"/>
</dbReference>
<dbReference type="InterPro" id="IPR036388">
    <property type="entry name" value="WH-like_DNA-bd_sf"/>
</dbReference>
<dbReference type="InterPro" id="IPR036390">
    <property type="entry name" value="WH_DNA-bd_sf"/>
</dbReference>
<dbReference type="NCBIfam" id="NF007501">
    <property type="entry name" value="PRK10094.1"/>
    <property type="match status" value="1"/>
</dbReference>
<dbReference type="PANTHER" id="PTHR30579:SF0">
    <property type="entry name" value="HTH-TYPE TRANSCRIPTIONAL ACTIVATOR ALLS"/>
    <property type="match status" value="1"/>
</dbReference>
<dbReference type="PANTHER" id="PTHR30579">
    <property type="entry name" value="TRANSCRIPTIONAL REGULATOR"/>
    <property type="match status" value="1"/>
</dbReference>
<dbReference type="Pfam" id="PF00126">
    <property type="entry name" value="HTH_1"/>
    <property type="match status" value="1"/>
</dbReference>
<dbReference type="Pfam" id="PF03466">
    <property type="entry name" value="LysR_substrate"/>
    <property type="match status" value="1"/>
</dbReference>
<dbReference type="SUPFAM" id="SSF53850">
    <property type="entry name" value="Periplasmic binding protein-like II"/>
    <property type="match status" value="1"/>
</dbReference>
<dbReference type="SUPFAM" id="SSF46785">
    <property type="entry name" value="Winged helix' DNA-binding domain"/>
    <property type="match status" value="1"/>
</dbReference>
<dbReference type="PROSITE" id="PS50931">
    <property type="entry name" value="HTH_LYSR"/>
    <property type="match status" value="1"/>
</dbReference>
<sequence length="308" mass="34512">MFDPETLRTFIAVAETGSFSKAAERLCKTTATISYRIKLLEENTGVALFFRTTRSVTLTAAGEHLLSQARDWLSWLESMPSELQQVNDGVERQVNIVINNLLYNPQAVAQLLAWLNERYPFTQFHISRQIYMGVWDSLLYEGFSLAIGVTGTEALANTFSLDPLGSVQWRFVMAADHPLANVEEPLTEAQLRRFPAVNIEDSARTLTKRVAWRLPGQKEIIVPDMETKIAAHLAGVGIGFLPKSLCQSMIDNQQLVSRVIPTMRPPSPLSLAWRKFGSGKAVEDIVTLFTQRRPEISGFLEIFGNPRS</sequence>
<comment type="function">
    <text evidence="2">Positive regulator essential for the expression of allD operon. Binds to the allD promoter.</text>
</comment>
<comment type="induction">
    <text evidence="2">Induced anaerobically and by nitrogen limitation. Repressed by AllR.</text>
</comment>
<comment type="similarity">
    <text evidence="3">Belongs to the LysR transcriptional regulatory family.</text>
</comment>
<keyword id="KW-0010">Activator</keyword>
<keyword id="KW-0238">DNA-binding</keyword>
<keyword id="KW-1185">Reference proteome</keyword>
<keyword id="KW-0804">Transcription</keyword>
<keyword id="KW-0805">Transcription regulation</keyword>
<name>ALLS_ECOLI</name>
<accession>P0ACR0</accession>
<accession>P77702</accession>
<accession>Q2MBS4</accession>
<protein>
    <recommendedName>
        <fullName>HTH-type transcriptional activator AllS</fullName>
    </recommendedName>
</protein>
<feature type="chain" id="PRO_0000105776" description="HTH-type transcriptional activator AllS">
    <location>
        <begin position="1"/>
        <end position="308"/>
    </location>
</feature>
<feature type="domain" description="HTH lysR-type" evidence="1">
    <location>
        <begin position="2"/>
        <end position="59"/>
    </location>
</feature>
<feature type="DNA-binding region" description="H-T-H motif" evidence="1">
    <location>
        <begin position="19"/>
        <end position="38"/>
    </location>
</feature>
<organism>
    <name type="scientific">Escherichia coli (strain K12)</name>
    <dbReference type="NCBI Taxonomy" id="83333"/>
    <lineage>
        <taxon>Bacteria</taxon>
        <taxon>Pseudomonadati</taxon>
        <taxon>Pseudomonadota</taxon>
        <taxon>Gammaproteobacteria</taxon>
        <taxon>Enterobacterales</taxon>
        <taxon>Enterobacteriaceae</taxon>
        <taxon>Escherichia</taxon>
    </lineage>
</organism>